<evidence type="ECO:0000255" key="1">
    <source>
        <dbReference type="HAMAP-Rule" id="MF_00605"/>
    </source>
</evidence>
<proteinExistence type="inferred from homology"/>
<accession>A5VSP1</accession>
<keyword id="KW-0963">Cytoplasm</keyword>
<keyword id="KW-0489">Methyltransferase</keyword>
<keyword id="KW-0949">S-adenosyl-L-methionine</keyword>
<keyword id="KW-0808">Transferase</keyword>
<keyword id="KW-0819">tRNA processing</keyword>
<feature type="chain" id="PRO_1000006454" description="tRNA (guanine-N(1)-)-methyltransferase">
    <location>
        <begin position="1"/>
        <end position="241"/>
    </location>
</feature>
<feature type="binding site" evidence="1">
    <location>
        <position position="117"/>
    </location>
    <ligand>
        <name>S-adenosyl-L-methionine</name>
        <dbReference type="ChEBI" id="CHEBI:59789"/>
    </ligand>
</feature>
<feature type="binding site" evidence="1">
    <location>
        <begin position="137"/>
        <end position="142"/>
    </location>
    <ligand>
        <name>S-adenosyl-L-methionine</name>
        <dbReference type="ChEBI" id="CHEBI:59789"/>
    </ligand>
</feature>
<protein>
    <recommendedName>
        <fullName evidence="1">tRNA (guanine-N(1)-)-methyltransferase</fullName>
        <ecNumber evidence="1">2.1.1.228</ecNumber>
    </recommendedName>
    <alternativeName>
        <fullName evidence="1">M1G-methyltransferase</fullName>
    </alternativeName>
    <alternativeName>
        <fullName evidence="1">tRNA [GM37] methyltransferase</fullName>
    </alternativeName>
</protein>
<comment type="function">
    <text evidence="1">Specifically methylates guanosine-37 in various tRNAs.</text>
</comment>
<comment type="catalytic activity">
    <reaction evidence="1">
        <text>guanosine(37) in tRNA + S-adenosyl-L-methionine = N(1)-methylguanosine(37) in tRNA + S-adenosyl-L-homocysteine + H(+)</text>
        <dbReference type="Rhea" id="RHEA:36899"/>
        <dbReference type="Rhea" id="RHEA-COMP:10145"/>
        <dbReference type="Rhea" id="RHEA-COMP:10147"/>
        <dbReference type="ChEBI" id="CHEBI:15378"/>
        <dbReference type="ChEBI" id="CHEBI:57856"/>
        <dbReference type="ChEBI" id="CHEBI:59789"/>
        <dbReference type="ChEBI" id="CHEBI:73542"/>
        <dbReference type="ChEBI" id="CHEBI:74269"/>
        <dbReference type="EC" id="2.1.1.228"/>
    </reaction>
</comment>
<comment type="subunit">
    <text evidence="1">Homodimer.</text>
</comment>
<comment type="subcellular location">
    <subcellularLocation>
        <location evidence="1">Cytoplasm</location>
    </subcellularLocation>
</comment>
<comment type="similarity">
    <text evidence="1">Belongs to the RNA methyltransferase TrmD family.</text>
</comment>
<organism>
    <name type="scientific">Brucella ovis (strain ATCC 25840 / 63/290 / NCTC 10512)</name>
    <dbReference type="NCBI Taxonomy" id="444178"/>
    <lineage>
        <taxon>Bacteria</taxon>
        <taxon>Pseudomonadati</taxon>
        <taxon>Pseudomonadota</taxon>
        <taxon>Alphaproteobacteria</taxon>
        <taxon>Hyphomicrobiales</taxon>
        <taxon>Brucellaceae</taxon>
        <taxon>Brucella/Ochrobactrum group</taxon>
        <taxon>Brucella</taxon>
    </lineage>
</organism>
<name>TRMD_BRUO2</name>
<sequence length="241" mass="26498">MPEKEGGRFHASVLTLYPEMFPGPLGISLAGKALAEGKWQLDTVQIRDFAEGRHRMVDDTPSGGGAGMVMKADVVARALDSVDDGRPMLLMTPRGKPLTQERVRALADGAGAIILCGRFEGVDERVIEGRNLEEISIGDYILSGGETAAIVLLDAVVRLLPGVMGNRESGETESFETGLLEHPHYTRPQEWEGRAIPDILTSGNHGAIDKWRLEQAERITRERRPDLWEAYCKNRRKIGGQ</sequence>
<reference key="1">
    <citation type="journal article" date="2009" name="PLoS ONE">
        <title>Genome degradation in Brucella ovis corresponds with narrowing of its host range and tissue tropism.</title>
        <authorList>
            <person name="Tsolis R.M."/>
            <person name="Seshadri R."/>
            <person name="Santos R.L."/>
            <person name="Sangari F.J."/>
            <person name="Lobo J.M."/>
            <person name="de Jong M.F."/>
            <person name="Ren Q."/>
            <person name="Myers G."/>
            <person name="Brinkac L.M."/>
            <person name="Nelson W.C."/>
            <person name="Deboy R.T."/>
            <person name="Angiuoli S."/>
            <person name="Khouri H."/>
            <person name="Dimitrov G."/>
            <person name="Robinson J.R."/>
            <person name="Mulligan S."/>
            <person name="Walker R.L."/>
            <person name="Elzer P.E."/>
            <person name="Hassan K.A."/>
            <person name="Paulsen I.T."/>
        </authorList>
    </citation>
    <scope>NUCLEOTIDE SEQUENCE [LARGE SCALE GENOMIC DNA]</scope>
    <source>
        <strain>ATCC 25840 / 63/290 / NCTC 10512</strain>
    </source>
</reference>
<dbReference type="EC" id="2.1.1.228" evidence="1"/>
<dbReference type="EMBL" id="CP000708">
    <property type="protein sequence ID" value="ABQ61898.1"/>
    <property type="molecule type" value="Genomic_DNA"/>
</dbReference>
<dbReference type="SMR" id="A5VSP1"/>
<dbReference type="KEGG" id="bov:BOV_1842"/>
<dbReference type="HOGENOM" id="CLU_047363_0_1_5"/>
<dbReference type="Proteomes" id="UP000006383">
    <property type="component" value="Chromosome I"/>
</dbReference>
<dbReference type="GO" id="GO:0005829">
    <property type="term" value="C:cytosol"/>
    <property type="evidence" value="ECO:0007669"/>
    <property type="project" value="TreeGrafter"/>
</dbReference>
<dbReference type="GO" id="GO:0052906">
    <property type="term" value="F:tRNA (guanine(37)-N1)-methyltransferase activity"/>
    <property type="evidence" value="ECO:0007669"/>
    <property type="project" value="UniProtKB-UniRule"/>
</dbReference>
<dbReference type="GO" id="GO:0002939">
    <property type="term" value="P:tRNA N1-guanine methylation"/>
    <property type="evidence" value="ECO:0007669"/>
    <property type="project" value="TreeGrafter"/>
</dbReference>
<dbReference type="CDD" id="cd18080">
    <property type="entry name" value="TrmD-like"/>
    <property type="match status" value="1"/>
</dbReference>
<dbReference type="Gene3D" id="3.40.1280.10">
    <property type="match status" value="1"/>
</dbReference>
<dbReference type="Gene3D" id="1.10.1270.20">
    <property type="entry name" value="tRNA(m1g37)methyltransferase, domain 2"/>
    <property type="match status" value="1"/>
</dbReference>
<dbReference type="HAMAP" id="MF_00605">
    <property type="entry name" value="TrmD"/>
    <property type="match status" value="1"/>
</dbReference>
<dbReference type="InterPro" id="IPR029028">
    <property type="entry name" value="Alpha/beta_knot_MTases"/>
</dbReference>
<dbReference type="InterPro" id="IPR023148">
    <property type="entry name" value="tRNA_m1G_MeTrfase_C_sf"/>
</dbReference>
<dbReference type="InterPro" id="IPR002649">
    <property type="entry name" value="tRNA_m1G_MeTrfase_TrmD"/>
</dbReference>
<dbReference type="InterPro" id="IPR029026">
    <property type="entry name" value="tRNA_m1G_MTases_N"/>
</dbReference>
<dbReference type="InterPro" id="IPR016009">
    <property type="entry name" value="tRNA_MeTrfase_TRMD/TRM10"/>
</dbReference>
<dbReference type="NCBIfam" id="NF000648">
    <property type="entry name" value="PRK00026.1"/>
    <property type="match status" value="1"/>
</dbReference>
<dbReference type="NCBIfam" id="TIGR00088">
    <property type="entry name" value="trmD"/>
    <property type="match status" value="1"/>
</dbReference>
<dbReference type="PANTHER" id="PTHR46417">
    <property type="entry name" value="TRNA (GUANINE-N(1)-)-METHYLTRANSFERASE"/>
    <property type="match status" value="1"/>
</dbReference>
<dbReference type="PANTHER" id="PTHR46417:SF1">
    <property type="entry name" value="TRNA (GUANINE-N(1)-)-METHYLTRANSFERASE"/>
    <property type="match status" value="1"/>
</dbReference>
<dbReference type="Pfam" id="PF01746">
    <property type="entry name" value="tRNA_m1G_MT"/>
    <property type="match status" value="1"/>
</dbReference>
<dbReference type="PIRSF" id="PIRSF000386">
    <property type="entry name" value="tRNA_mtase"/>
    <property type="match status" value="1"/>
</dbReference>
<dbReference type="SUPFAM" id="SSF75217">
    <property type="entry name" value="alpha/beta knot"/>
    <property type="match status" value="1"/>
</dbReference>
<gene>
    <name evidence="1" type="primary">trmD</name>
    <name type="ordered locus">BOV_1842</name>
</gene>